<proteinExistence type="inferred from homology"/>
<evidence type="ECO:0000255" key="1"/>
<evidence type="ECO:0000256" key="2">
    <source>
        <dbReference type="SAM" id="MobiDB-lite"/>
    </source>
</evidence>
<evidence type="ECO:0000305" key="3"/>
<gene>
    <name type="ordered locus">MT2437</name>
</gene>
<keyword id="KW-0067">ATP-binding</keyword>
<keyword id="KW-0963">Cytoplasm</keyword>
<keyword id="KW-0547">Nucleotide-binding</keyword>
<keyword id="KW-1185">Reference proteome</keyword>
<dbReference type="EMBL" id="AE000516">
    <property type="protein sequence ID" value="AAK46731.1"/>
    <property type="molecule type" value="Genomic_DNA"/>
</dbReference>
<dbReference type="PIR" id="G70586">
    <property type="entry name" value="G70586"/>
</dbReference>
<dbReference type="RefSeq" id="WP_003412235.1">
    <property type="nucleotide sequence ID" value="NZ_KK341227.1"/>
</dbReference>
<dbReference type="SMR" id="P9WIA2"/>
<dbReference type="KEGG" id="mtc:MT2437"/>
<dbReference type="PATRIC" id="fig|83331.31.peg.2625"/>
<dbReference type="HOGENOM" id="CLU_051654_0_0_11"/>
<dbReference type="Proteomes" id="UP000001020">
    <property type="component" value="Chromosome"/>
</dbReference>
<dbReference type="GO" id="GO:0005829">
    <property type="term" value="C:cytosol"/>
    <property type="evidence" value="ECO:0007669"/>
    <property type="project" value="TreeGrafter"/>
</dbReference>
<dbReference type="GO" id="GO:0005524">
    <property type="term" value="F:ATP binding"/>
    <property type="evidence" value="ECO:0007669"/>
    <property type="project" value="UniProtKB-KW"/>
</dbReference>
<dbReference type="GO" id="GO:0003723">
    <property type="term" value="F:RNA binding"/>
    <property type="evidence" value="ECO:0007669"/>
    <property type="project" value="InterPro"/>
</dbReference>
<dbReference type="FunFam" id="3.40.50.300:FF:000013">
    <property type="entry name" value="PhoH family ATPase"/>
    <property type="match status" value="1"/>
</dbReference>
<dbReference type="Gene3D" id="3.40.50.300">
    <property type="entry name" value="P-loop containing nucleotide triphosphate hydrolases"/>
    <property type="match status" value="1"/>
</dbReference>
<dbReference type="InterPro" id="IPR004087">
    <property type="entry name" value="KH_dom"/>
</dbReference>
<dbReference type="InterPro" id="IPR036612">
    <property type="entry name" value="KH_dom_type_1_sf"/>
</dbReference>
<dbReference type="InterPro" id="IPR027417">
    <property type="entry name" value="P-loop_NTPase"/>
</dbReference>
<dbReference type="InterPro" id="IPR003714">
    <property type="entry name" value="PhoH"/>
</dbReference>
<dbReference type="InterPro" id="IPR051451">
    <property type="entry name" value="PhoH2-like"/>
</dbReference>
<dbReference type="PANTHER" id="PTHR30473:SF1">
    <property type="entry name" value="PHOH-LIKE PROTEIN"/>
    <property type="match status" value="1"/>
</dbReference>
<dbReference type="PANTHER" id="PTHR30473">
    <property type="entry name" value="PROTEIN PHOH"/>
    <property type="match status" value="1"/>
</dbReference>
<dbReference type="Pfam" id="PF02562">
    <property type="entry name" value="PhoH"/>
    <property type="match status" value="1"/>
</dbReference>
<dbReference type="SMART" id="SM00322">
    <property type="entry name" value="KH"/>
    <property type="match status" value="1"/>
</dbReference>
<dbReference type="SUPFAM" id="SSF54791">
    <property type="entry name" value="Eukaryotic type KH-domain (KH-domain type I)"/>
    <property type="match status" value="1"/>
</dbReference>
<dbReference type="SUPFAM" id="SSF52540">
    <property type="entry name" value="P-loop containing nucleoside triphosphate hydrolases"/>
    <property type="match status" value="1"/>
</dbReference>
<feature type="chain" id="PRO_0000428042" description="PhoH-like protein">
    <location>
        <begin position="1"/>
        <end position="352"/>
    </location>
</feature>
<feature type="region of interest" description="Disordered" evidence="2">
    <location>
        <begin position="1"/>
        <end position="21"/>
    </location>
</feature>
<feature type="compositionally biased region" description="Low complexity" evidence="2">
    <location>
        <begin position="9"/>
        <end position="20"/>
    </location>
</feature>
<feature type="binding site" evidence="1">
    <location>
        <begin position="150"/>
        <end position="157"/>
    </location>
    <ligand>
        <name>ATP</name>
        <dbReference type="ChEBI" id="CHEBI:30616"/>
    </ligand>
</feature>
<name>PHOL_MYCTO</name>
<organism>
    <name type="scientific">Mycobacterium tuberculosis (strain CDC 1551 / Oshkosh)</name>
    <dbReference type="NCBI Taxonomy" id="83331"/>
    <lineage>
        <taxon>Bacteria</taxon>
        <taxon>Bacillati</taxon>
        <taxon>Actinomycetota</taxon>
        <taxon>Actinomycetes</taxon>
        <taxon>Mycobacteriales</taxon>
        <taxon>Mycobacteriaceae</taxon>
        <taxon>Mycobacterium</taxon>
        <taxon>Mycobacterium tuberculosis complex</taxon>
    </lineage>
</organism>
<sequence length="352" mass="37799">MTSRETRAADAAGARQADAQVRSSIDVPPDLVVGLLGSADENLRALERTLSADLHVRGNAVTLCGEPADVALAERVISELIAIVASGQSLTPEVVRHSVAMLVGTGNESPAEVLTLDILSRRGKTIRPKTLNQKRYVDAIDANTIVFGIGPAGTGKTYLAMAKAVHALQTKQVTRIILTRPAVEAGERLGFLPGTLSEKIDPYLRPLYDALYDMMDPELIPKLMSAGVIEVAPLAYMRGRTLNDAFIVLDEAQNTTAEQMKMFLTRLGFGSKVVVTGDVTQIDLPGGARSGLRAAVDILEDIDDIHIAELTSVDVVRHRLVSEIVDAYARYEEPGSGLNRAARRASGARGRR</sequence>
<comment type="subcellular location">
    <subcellularLocation>
        <location evidence="3">Cytoplasm</location>
    </subcellularLocation>
</comment>
<comment type="similarity">
    <text evidence="3">Belongs to the PhoH family.</text>
</comment>
<protein>
    <recommendedName>
        <fullName>PhoH-like protein</fullName>
    </recommendedName>
</protein>
<reference key="1">
    <citation type="journal article" date="2002" name="J. Bacteriol.">
        <title>Whole-genome comparison of Mycobacterium tuberculosis clinical and laboratory strains.</title>
        <authorList>
            <person name="Fleischmann R.D."/>
            <person name="Alland D."/>
            <person name="Eisen J.A."/>
            <person name="Carpenter L."/>
            <person name="White O."/>
            <person name="Peterson J.D."/>
            <person name="DeBoy R.T."/>
            <person name="Dodson R.J."/>
            <person name="Gwinn M.L."/>
            <person name="Haft D.H."/>
            <person name="Hickey E.K."/>
            <person name="Kolonay J.F."/>
            <person name="Nelson W.C."/>
            <person name="Umayam L.A."/>
            <person name="Ermolaeva M.D."/>
            <person name="Salzberg S.L."/>
            <person name="Delcher A."/>
            <person name="Utterback T.R."/>
            <person name="Weidman J.F."/>
            <person name="Khouri H.M."/>
            <person name="Gill J."/>
            <person name="Mikula A."/>
            <person name="Bishai W."/>
            <person name="Jacobs W.R. Jr."/>
            <person name="Venter J.C."/>
            <person name="Fraser C.M."/>
        </authorList>
    </citation>
    <scope>NUCLEOTIDE SEQUENCE [LARGE SCALE GENOMIC DNA]</scope>
    <source>
        <strain>CDC 1551 / Oshkosh</strain>
    </source>
</reference>
<accession>P9WIA2</accession>
<accession>L0TCB4</accession>
<accession>O05830</accession>
<accession>P0A5S0</accession>